<evidence type="ECO:0000255" key="1">
    <source>
        <dbReference type="HAMAP-Rule" id="MF_00122"/>
    </source>
</evidence>
<reference key="1">
    <citation type="journal article" date="2003" name="Proc. Natl. Acad. Sci. U.S.A.">
        <title>Genome sequence of the cyanobacterium Prochlorococcus marinus SS120, a nearly minimal oxyphototrophic genome.</title>
        <authorList>
            <person name="Dufresne A."/>
            <person name="Salanoubat M."/>
            <person name="Partensky F."/>
            <person name="Artiguenave F."/>
            <person name="Axmann I.M."/>
            <person name="Barbe V."/>
            <person name="Duprat S."/>
            <person name="Galperin M.Y."/>
            <person name="Koonin E.V."/>
            <person name="Le Gall F."/>
            <person name="Makarova K.S."/>
            <person name="Ostrowski M."/>
            <person name="Oztas S."/>
            <person name="Robert C."/>
            <person name="Rogozin I.B."/>
            <person name="Scanlan D.J."/>
            <person name="Tandeau de Marsac N."/>
            <person name="Weissenbach J."/>
            <person name="Wincker P."/>
            <person name="Wolf Y.I."/>
            <person name="Hess W.R."/>
        </authorList>
    </citation>
    <scope>NUCLEOTIDE SEQUENCE [LARGE SCALE GENOMIC DNA]</scope>
    <source>
        <strain>SARG / CCMP1375 / SS120</strain>
    </source>
</reference>
<feature type="chain" id="PRO_0000105318" description="Aspartyl/glutamyl-tRNA(Asn/Gln) amidotransferase subunit C">
    <location>
        <begin position="1"/>
        <end position="97"/>
    </location>
</feature>
<protein>
    <recommendedName>
        <fullName evidence="1">Aspartyl/glutamyl-tRNA(Asn/Gln) amidotransferase subunit C</fullName>
        <shortName evidence="1">Asp/Glu-ADT subunit C</shortName>
        <ecNumber evidence="1">6.3.5.-</ecNumber>
    </recommendedName>
</protein>
<keyword id="KW-0067">ATP-binding</keyword>
<keyword id="KW-0436">Ligase</keyword>
<keyword id="KW-0547">Nucleotide-binding</keyword>
<keyword id="KW-0648">Protein biosynthesis</keyword>
<keyword id="KW-1185">Reference proteome</keyword>
<organism>
    <name type="scientific">Prochlorococcus marinus (strain SARG / CCMP1375 / SS120)</name>
    <dbReference type="NCBI Taxonomy" id="167539"/>
    <lineage>
        <taxon>Bacteria</taxon>
        <taxon>Bacillati</taxon>
        <taxon>Cyanobacteriota</taxon>
        <taxon>Cyanophyceae</taxon>
        <taxon>Synechococcales</taxon>
        <taxon>Prochlorococcaceae</taxon>
        <taxon>Prochlorococcus</taxon>
    </lineage>
</organism>
<comment type="function">
    <text evidence="1">Allows the formation of correctly charged Asn-tRNA(Asn) or Gln-tRNA(Gln) through the transamidation of misacylated Asp-tRNA(Asn) or Glu-tRNA(Gln) in organisms which lack either or both of asparaginyl-tRNA or glutaminyl-tRNA synthetases. The reaction takes place in the presence of glutamine and ATP through an activated phospho-Asp-tRNA(Asn) or phospho-Glu-tRNA(Gln).</text>
</comment>
<comment type="catalytic activity">
    <reaction evidence="1">
        <text>L-glutamyl-tRNA(Gln) + L-glutamine + ATP + H2O = L-glutaminyl-tRNA(Gln) + L-glutamate + ADP + phosphate + H(+)</text>
        <dbReference type="Rhea" id="RHEA:17521"/>
        <dbReference type="Rhea" id="RHEA-COMP:9681"/>
        <dbReference type="Rhea" id="RHEA-COMP:9684"/>
        <dbReference type="ChEBI" id="CHEBI:15377"/>
        <dbReference type="ChEBI" id="CHEBI:15378"/>
        <dbReference type="ChEBI" id="CHEBI:29985"/>
        <dbReference type="ChEBI" id="CHEBI:30616"/>
        <dbReference type="ChEBI" id="CHEBI:43474"/>
        <dbReference type="ChEBI" id="CHEBI:58359"/>
        <dbReference type="ChEBI" id="CHEBI:78520"/>
        <dbReference type="ChEBI" id="CHEBI:78521"/>
        <dbReference type="ChEBI" id="CHEBI:456216"/>
    </reaction>
</comment>
<comment type="catalytic activity">
    <reaction evidence="1">
        <text>L-aspartyl-tRNA(Asn) + L-glutamine + ATP + H2O = L-asparaginyl-tRNA(Asn) + L-glutamate + ADP + phosphate + 2 H(+)</text>
        <dbReference type="Rhea" id="RHEA:14513"/>
        <dbReference type="Rhea" id="RHEA-COMP:9674"/>
        <dbReference type="Rhea" id="RHEA-COMP:9677"/>
        <dbReference type="ChEBI" id="CHEBI:15377"/>
        <dbReference type="ChEBI" id="CHEBI:15378"/>
        <dbReference type="ChEBI" id="CHEBI:29985"/>
        <dbReference type="ChEBI" id="CHEBI:30616"/>
        <dbReference type="ChEBI" id="CHEBI:43474"/>
        <dbReference type="ChEBI" id="CHEBI:58359"/>
        <dbReference type="ChEBI" id="CHEBI:78515"/>
        <dbReference type="ChEBI" id="CHEBI:78516"/>
        <dbReference type="ChEBI" id="CHEBI:456216"/>
    </reaction>
</comment>
<comment type="subunit">
    <text evidence="1">Heterotrimer of A, B and C subunits.</text>
</comment>
<comment type="similarity">
    <text evidence="1">Belongs to the GatC family.</text>
</comment>
<accession>Q7VDV3</accession>
<gene>
    <name evidence="1" type="primary">gatC</name>
    <name type="ordered locus">Pro_0265</name>
</gene>
<dbReference type="EC" id="6.3.5.-" evidence="1"/>
<dbReference type="EMBL" id="AE017126">
    <property type="protein sequence ID" value="AAP99311.1"/>
    <property type="molecule type" value="Genomic_DNA"/>
</dbReference>
<dbReference type="RefSeq" id="NP_874659.1">
    <property type="nucleotide sequence ID" value="NC_005042.1"/>
</dbReference>
<dbReference type="RefSeq" id="WP_011124420.1">
    <property type="nucleotide sequence ID" value="NC_005042.1"/>
</dbReference>
<dbReference type="SMR" id="Q7VDV3"/>
<dbReference type="STRING" id="167539.Pro_0265"/>
<dbReference type="EnsemblBacteria" id="AAP99311">
    <property type="protein sequence ID" value="AAP99311"/>
    <property type="gene ID" value="Pro_0265"/>
</dbReference>
<dbReference type="KEGG" id="pma:Pro_0265"/>
<dbReference type="PATRIC" id="fig|167539.5.peg.273"/>
<dbReference type="eggNOG" id="COG0721">
    <property type="taxonomic scope" value="Bacteria"/>
</dbReference>
<dbReference type="HOGENOM" id="CLU_105899_1_2_3"/>
<dbReference type="OrthoDB" id="9813938at2"/>
<dbReference type="Proteomes" id="UP000001420">
    <property type="component" value="Chromosome"/>
</dbReference>
<dbReference type="GO" id="GO:0050566">
    <property type="term" value="F:asparaginyl-tRNA synthase (glutamine-hydrolyzing) activity"/>
    <property type="evidence" value="ECO:0007669"/>
    <property type="project" value="RHEA"/>
</dbReference>
<dbReference type="GO" id="GO:0005524">
    <property type="term" value="F:ATP binding"/>
    <property type="evidence" value="ECO:0007669"/>
    <property type="project" value="UniProtKB-KW"/>
</dbReference>
<dbReference type="GO" id="GO:0050567">
    <property type="term" value="F:glutaminyl-tRNA synthase (glutamine-hydrolyzing) activity"/>
    <property type="evidence" value="ECO:0007669"/>
    <property type="project" value="UniProtKB-UniRule"/>
</dbReference>
<dbReference type="GO" id="GO:0070681">
    <property type="term" value="P:glutaminyl-tRNAGln biosynthesis via transamidation"/>
    <property type="evidence" value="ECO:0007669"/>
    <property type="project" value="TreeGrafter"/>
</dbReference>
<dbReference type="GO" id="GO:0006450">
    <property type="term" value="P:regulation of translational fidelity"/>
    <property type="evidence" value="ECO:0007669"/>
    <property type="project" value="InterPro"/>
</dbReference>
<dbReference type="GO" id="GO:0006412">
    <property type="term" value="P:translation"/>
    <property type="evidence" value="ECO:0007669"/>
    <property type="project" value="UniProtKB-UniRule"/>
</dbReference>
<dbReference type="Gene3D" id="1.10.20.60">
    <property type="entry name" value="Glu-tRNAGln amidotransferase C subunit, N-terminal domain"/>
    <property type="match status" value="1"/>
</dbReference>
<dbReference type="HAMAP" id="MF_00122">
    <property type="entry name" value="GatC"/>
    <property type="match status" value="1"/>
</dbReference>
<dbReference type="InterPro" id="IPR036113">
    <property type="entry name" value="Asp/Glu-ADT_sf_sub_c"/>
</dbReference>
<dbReference type="InterPro" id="IPR003837">
    <property type="entry name" value="GatC"/>
</dbReference>
<dbReference type="NCBIfam" id="TIGR00135">
    <property type="entry name" value="gatC"/>
    <property type="match status" value="1"/>
</dbReference>
<dbReference type="PANTHER" id="PTHR15004">
    <property type="entry name" value="GLUTAMYL-TRNA(GLN) AMIDOTRANSFERASE SUBUNIT C, MITOCHONDRIAL"/>
    <property type="match status" value="1"/>
</dbReference>
<dbReference type="PANTHER" id="PTHR15004:SF0">
    <property type="entry name" value="GLUTAMYL-TRNA(GLN) AMIDOTRANSFERASE SUBUNIT C, MITOCHONDRIAL"/>
    <property type="match status" value="1"/>
</dbReference>
<dbReference type="Pfam" id="PF02686">
    <property type="entry name" value="GatC"/>
    <property type="match status" value="1"/>
</dbReference>
<dbReference type="SUPFAM" id="SSF141000">
    <property type="entry name" value="Glu-tRNAGln amidotransferase C subunit"/>
    <property type="match status" value="1"/>
</dbReference>
<proteinExistence type="inferred from homology"/>
<sequence length="97" mass="11221">MTRISSDDVRKVSKLARLEISEEHVETYANQLEEILEYIAQLEKIDTKNIPPTTRAVEVVNVLREDIVDKSNVRDKILDLAPNREGQFYRVPKILAE</sequence>
<name>GATC_PROMA</name>